<sequence length="708" mass="78400">MATARGGSGPDPGSRGLLLLSFSVVLAGLCGGNSVERKIYIPLNKTAPCVRLLNATHQIGCQSSISGDTGVIHVVEKEDDLKWVLTDGPNPPYMVLLEGKLFTRDIMEKLKGETSRIAGLAVTLAKPNSTSSFSPSVQCPNDGFGIYSNSYGPEFAHCKKTLWNELGNGLAYDDFSFPIFLLEDENETKVIKQCYQDHNLGQNGSAPSFPLCAMQLFSHMHAVISTATCMRRSFIQSTFSINPEIVCDPLSDYNVWSMLKPINTSGGLEPDVRVVVAATRLDSRSFFWNVAPGAESAVASFVTQLAAAEALHKAPDVTTLPRNVMFVFFQGETFDYIGSSRMVYDMENGKFPVRLENIDSFVELGQVALRTSLELWMHTDPMSQKNESVKNQVEDLLVTLEQSGADTPQVVLSRLVQSQALPPSSLQRFLRARNISGVVLADHSGSFHNRYYQSIYDTAENINVTYPESQSPEEDLNFVTDTAKALADVATVLARALYKLAGGTNFNNSIQADPQTVTRLLYGFLVRANNSWFQSILRHDLRSYLDDGPLQHYIAVSSPTNTTYVVQYALANLTGKVTNLTQEQCQDPSKVPNESKDLYEYSWVQGPWNSNKTERLPRCVRSTVRLARALSPAFELSQWSSTEYSTWAESRWKDIQARIFLIASKELEFITLIVGFSILVFSLIVTYCINAKADVLFVAPREPGAVSY</sequence>
<evidence type="ECO:0000250" key="1">
    <source>
        <dbReference type="UniProtKB" id="Q92542"/>
    </source>
</evidence>
<evidence type="ECO:0000255" key="2"/>
<evidence type="ECO:0000303" key="3">
    <source ref="1"/>
</evidence>
<evidence type="ECO:0000305" key="4"/>
<evidence type="ECO:0007744" key="5">
    <source>
    </source>
</evidence>
<gene>
    <name type="primary">Ncstn</name>
</gene>
<comment type="function">
    <text evidence="1">Essential subunit of the gamma-secretase complex, an endoprotease complex that catalyzes the intramembrane cleavage of integral membrane proteins such as Notch receptors and APP (amyloid-beta precursor protein). The gamma-secretase complex plays a role in Notch and Wnt signaling cascades and regulation of downstream processes via its role in processing key regulatory proteins, and by regulating cytosolic CTNNB1 levels.</text>
</comment>
<comment type="subunit">
    <text evidence="1">Component of the gamma-secretase complex. The functional gamma-secretase complex is composed of at least four polypeptides: a presenilin homodimer (PSEN1 or PSEN2), nicastrin (NCSTN), APH1 (APH1A or APH1B) and PEN2. Binds to proteolytic processed C-terminal fragments C83 and C99 of the amyloid precursor protein (APP). Interacts with PSEN1 and PSEN2.</text>
</comment>
<comment type="subcellular location">
    <subcellularLocation>
        <location evidence="1">Membrane</location>
        <topology evidence="1">Single-pass type I membrane protein</topology>
    </subcellularLocation>
    <subcellularLocation>
        <location evidence="1">Cytoplasmic vesicle membrane</location>
        <topology evidence="1">Single-pass type I membrane protein</topology>
    </subcellularLocation>
    <subcellularLocation>
        <location evidence="1">Melanosome</location>
    </subcellularLocation>
    <text evidence="1">Identified by mass spectrometry in melanosome fractions from stage I to stage IV.</text>
</comment>
<comment type="alternative products">
    <event type="alternative splicing"/>
    <isoform>
        <id>Q8CGU6-1</id>
        <name>1</name>
        <sequence type="displayed"/>
    </isoform>
    <isoform>
        <id>Q8CGU6-2</id>
        <name>2</name>
        <sequence type="described" ref="VSP_008387"/>
    </isoform>
</comment>
<comment type="PTM">
    <text evidence="1">N-glycosylated.</text>
</comment>
<comment type="similarity">
    <text evidence="4">Belongs to the nicastrin family.</text>
</comment>
<organism>
    <name type="scientific">Rattus norvegicus</name>
    <name type="common">Rat</name>
    <dbReference type="NCBI Taxonomy" id="10116"/>
    <lineage>
        <taxon>Eukaryota</taxon>
        <taxon>Metazoa</taxon>
        <taxon>Chordata</taxon>
        <taxon>Craniata</taxon>
        <taxon>Vertebrata</taxon>
        <taxon>Euteleostomi</taxon>
        <taxon>Mammalia</taxon>
        <taxon>Eutheria</taxon>
        <taxon>Euarchontoglires</taxon>
        <taxon>Glires</taxon>
        <taxon>Rodentia</taxon>
        <taxon>Myomorpha</taxon>
        <taxon>Muroidea</taxon>
        <taxon>Muridae</taxon>
        <taxon>Murinae</taxon>
        <taxon>Rattus</taxon>
    </lineage>
</organism>
<dbReference type="EMBL" id="AF510722">
    <property type="protein sequence ID" value="AAO15915.1"/>
    <property type="molecule type" value="mRNA"/>
</dbReference>
<dbReference type="EMBL" id="AY101378">
    <property type="protein sequence ID" value="AAM44078.1"/>
    <property type="molecule type" value="mRNA"/>
</dbReference>
<dbReference type="RefSeq" id="NP_777353.1">
    <molecule id="Q8CGU6-1"/>
    <property type="nucleotide sequence ID" value="NM_174864.3"/>
</dbReference>
<dbReference type="RefSeq" id="XP_008767955.1">
    <property type="nucleotide sequence ID" value="XM_008769733.1"/>
</dbReference>
<dbReference type="SMR" id="Q8CGU6"/>
<dbReference type="BioGRID" id="252837">
    <property type="interactions" value="1"/>
</dbReference>
<dbReference type="CORUM" id="Q8CGU6"/>
<dbReference type="FunCoup" id="Q8CGU6">
    <property type="interactions" value="3210"/>
</dbReference>
<dbReference type="IntAct" id="Q8CGU6">
    <property type="interactions" value="4"/>
</dbReference>
<dbReference type="STRING" id="10116.ENSRNOP00000008150"/>
<dbReference type="GlyCosmos" id="Q8CGU6">
    <property type="glycosylation" value="16 sites, 7 glycans"/>
</dbReference>
<dbReference type="GlyGen" id="Q8CGU6">
    <property type="glycosylation" value="16 sites, 7 N-linked glycans (1 site)"/>
</dbReference>
<dbReference type="iPTMnet" id="Q8CGU6"/>
<dbReference type="PhosphoSitePlus" id="Q8CGU6"/>
<dbReference type="SwissPalm" id="Q8CGU6"/>
<dbReference type="jPOST" id="Q8CGU6"/>
<dbReference type="PaxDb" id="10116-ENSRNOP00000008150"/>
<dbReference type="Ensembl" id="ENSRNOT00000008150.6">
    <molecule id="Q8CGU6-1"/>
    <property type="protein sequence ID" value="ENSRNOP00000008150.3"/>
    <property type="gene ID" value="ENSRNOG00000005355.8"/>
</dbReference>
<dbReference type="Ensembl" id="ENSRNOT00000081534.2">
    <molecule id="Q8CGU6-2"/>
    <property type="protein sequence ID" value="ENSRNOP00000075174.2"/>
    <property type="gene ID" value="ENSRNOG00000005355.8"/>
</dbReference>
<dbReference type="GeneID" id="289231"/>
<dbReference type="KEGG" id="rno:289231"/>
<dbReference type="UCSC" id="RGD:631418">
    <molecule id="Q8CGU6-1"/>
    <property type="organism name" value="rat"/>
</dbReference>
<dbReference type="AGR" id="RGD:631418"/>
<dbReference type="CTD" id="23385"/>
<dbReference type="RGD" id="631418">
    <property type="gene designation" value="Ncstn"/>
</dbReference>
<dbReference type="eggNOG" id="KOG2657">
    <property type="taxonomic scope" value="Eukaryota"/>
</dbReference>
<dbReference type="GeneTree" id="ENSGT00390000014633"/>
<dbReference type="HOGENOM" id="CLU_024257_0_0_1"/>
<dbReference type="InParanoid" id="Q8CGU6"/>
<dbReference type="OMA" id="ECVYPGV"/>
<dbReference type="OrthoDB" id="755951at2759"/>
<dbReference type="PhylomeDB" id="Q8CGU6"/>
<dbReference type="TreeFam" id="TF317086"/>
<dbReference type="Reactome" id="R-RNO-1251985">
    <property type="pathway name" value="Nuclear signaling by ERBB4"/>
</dbReference>
<dbReference type="Reactome" id="R-RNO-193692">
    <property type="pathway name" value="Regulated proteolysis of p75NTR"/>
</dbReference>
<dbReference type="Reactome" id="R-RNO-205043">
    <property type="pathway name" value="NRIF signals cell death from the nucleus"/>
</dbReference>
<dbReference type="Reactome" id="R-RNO-3928665">
    <property type="pathway name" value="EPH-ephrin mediated repulsion of cells"/>
</dbReference>
<dbReference type="Reactome" id="R-RNO-6798695">
    <property type="pathway name" value="Neutrophil degranulation"/>
</dbReference>
<dbReference type="Reactome" id="R-RNO-9013507">
    <property type="pathway name" value="NOTCH3 Activation and Transmission of Signal to the Nucleus"/>
</dbReference>
<dbReference type="Reactome" id="R-RNO-9017802">
    <property type="pathway name" value="Noncanonical activation of NOTCH3"/>
</dbReference>
<dbReference type="Reactome" id="R-RNO-9839383">
    <property type="pathway name" value="TGFBR3 PTM regulation"/>
</dbReference>
<dbReference type="PRO" id="PR:Q8CGU6"/>
<dbReference type="Proteomes" id="UP000002494">
    <property type="component" value="Chromosome 13"/>
</dbReference>
<dbReference type="Bgee" id="ENSRNOG00000005355">
    <property type="expression patterns" value="Expressed in jejunum and 19 other cell types or tissues"/>
</dbReference>
<dbReference type="ExpressionAtlas" id="Q8CGU6">
    <property type="expression patterns" value="baseline and differential"/>
</dbReference>
<dbReference type="GO" id="GO:0030659">
    <property type="term" value="C:cytoplasmic vesicle membrane"/>
    <property type="evidence" value="ECO:0007669"/>
    <property type="project" value="UniProtKB-SubCell"/>
</dbReference>
<dbReference type="GO" id="GO:0005769">
    <property type="term" value="C:early endosome"/>
    <property type="evidence" value="ECO:0000314"/>
    <property type="project" value="RGD"/>
</dbReference>
<dbReference type="GO" id="GO:0005783">
    <property type="term" value="C:endoplasmic reticulum"/>
    <property type="evidence" value="ECO:0000250"/>
    <property type="project" value="UniProtKB"/>
</dbReference>
<dbReference type="GO" id="GO:0070765">
    <property type="term" value="C:gamma-secretase complex"/>
    <property type="evidence" value="ECO:0000250"/>
    <property type="project" value="UniProtKB"/>
</dbReference>
<dbReference type="GO" id="GO:0005794">
    <property type="term" value="C:Golgi apparatus"/>
    <property type="evidence" value="ECO:0000250"/>
    <property type="project" value="UniProtKB"/>
</dbReference>
<dbReference type="GO" id="GO:0005765">
    <property type="term" value="C:lysosomal membrane"/>
    <property type="evidence" value="ECO:0000314"/>
    <property type="project" value="RGD"/>
</dbReference>
<dbReference type="GO" id="GO:0005764">
    <property type="term" value="C:lysosome"/>
    <property type="evidence" value="ECO:0000266"/>
    <property type="project" value="RGD"/>
</dbReference>
<dbReference type="GO" id="GO:0042470">
    <property type="term" value="C:melanosome"/>
    <property type="evidence" value="ECO:0007669"/>
    <property type="project" value="UniProtKB-SubCell"/>
</dbReference>
<dbReference type="GO" id="GO:0016020">
    <property type="term" value="C:membrane"/>
    <property type="evidence" value="ECO:0000250"/>
    <property type="project" value="UniProtKB"/>
</dbReference>
<dbReference type="GO" id="GO:0005886">
    <property type="term" value="C:plasma membrane"/>
    <property type="evidence" value="ECO:0000250"/>
    <property type="project" value="UniProtKB"/>
</dbReference>
<dbReference type="GO" id="GO:0042734">
    <property type="term" value="C:presynaptic membrane"/>
    <property type="evidence" value="ECO:0000314"/>
    <property type="project" value="SynGO"/>
</dbReference>
<dbReference type="GO" id="GO:0032991">
    <property type="term" value="C:protein-containing complex"/>
    <property type="evidence" value="ECO:0000314"/>
    <property type="project" value="RGD"/>
</dbReference>
<dbReference type="GO" id="GO:0042383">
    <property type="term" value="C:sarcolemma"/>
    <property type="evidence" value="ECO:0000314"/>
    <property type="project" value="RGD"/>
</dbReference>
<dbReference type="GO" id="GO:0097060">
    <property type="term" value="C:synaptic membrane"/>
    <property type="evidence" value="ECO:0000314"/>
    <property type="project" value="RGD"/>
</dbReference>
<dbReference type="GO" id="GO:0008021">
    <property type="term" value="C:synaptic vesicle"/>
    <property type="evidence" value="ECO:0000314"/>
    <property type="project" value="RGD"/>
</dbReference>
<dbReference type="GO" id="GO:0042500">
    <property type="term" value="F:aspartic endopeptidase activity, intramembrane cleaving"/>
    <property type="evidence" value="ECO:0007669"/>
    <property type="project" value="Ensembl"/>
</dbReference>
<dbReference type="GO" id="GO:0051117">
    <property type="term" value="F:ATPase binding"/>
    <property type="evidence" value="ECO:0000266"/>
    <property type="project" value="RGD"/>
</dbReference>
<dbReference type="GO" id="GO:0061133">
    <property type="term" value="F:endopeptidase activator activity"/>
    <property type="evidence" value="ECO:0000266"/>
    <property type="project" value="RGD"/>
</dbReference>
<dbReference type="GO" id="GO:0070851">
    <property type="term" value="F:growth factor receptor binding"/>
    <property type="evidence" value="ECO:0000266"/>
    <property type="project" value="RGD"/>
</dbReference>
<dbReference type="GO" id="GO:0008233">
    <property type="term" value="F:peptidase activity"/>
    <property type="evidence" value="ECO:0000314"/>
    <property type="project" value="RGD"/>
</dbReference>
<dbReference type="GO" id="GO:0030674">
    <property type="term" value="F:protein-macromolecule adaptor activity"/>
    <property type="evidence" value="ECO:0000266"/>
    <property type="project" value="RGD"/>
</dbReference>
<dbReference type="GO" id="GO:0030534">
    <property type="term" value="P:adult behavior"/>
    <property type="evidence" value="ECO:0000266"/>
    <property type="project" value="RGD"/>
</dbReference>
<dbReference type="GO" id="GO:0042983">
    <property type="term" value="P:amyloid precursor protein biosynthetic process"/>
    <property type="evidence" value="ECO:0000266"/>
    <property type="project" value="RGD"/>
</dbReference>
<dbReference type="GO" id="GO:0042987">
    <property type="term" value="P:amyloid precursor protein catabolic process"/>
    <property type="evidence" value="ECO:0000266"/>
    <property type="project" value="RGD"/>
</dbReference>
<dbReference type="GO" id="GO:0042982">
    <property type="term" value="P:amyloid precursor protein metabolic process"/>
    <property type="evidence" value="ECO:0000250"/>
    <property type="project" value="UniProtKB"/>
</dbReference>
<dbReference type="GO" id="GO:0034205">
    <property type="term" value="P:amyloid-beta formation"/>
    <property type="evidence" value="ECO:0000250"/>
    <property type="project" value="UniProtKB"/>
</dbReference>
<dbReference type="GO" id="GO:0050435">
    <property type="term" value="P:amyloid-beta metabolic process"/>
    <property type="evidence" value="ECO:0000266"/>
    <property type="project" value="RGD"/>
</dbReference>
<dbReference type="GO" id="GO:0071277">
    <property type="term" value="P:cellular response to calcium ion"/>
    <property type="evidence" value="ECO:0000266"/>
    <property type="project" value="RGD"/>
</dbReference>
<dbReference type="GO" id="GO:0022010">
    <property type="term" value="P:central nervous system myelination"/>
    <property type="evidence" value="ECO:0000266"/>
    <property type="project" value="RGD"/>
</dbReference>
<dbReference type="GO" id="GO:0021549">
    <property type="term" value="P:cerebellum development"/>
    <property type="evidence" value="ECO:0000270"/>
    <property type="project" value="RGD"/>
</dbReference>
<dbReference type="GO" id="GO:0050673">
    <property type="term" value="P:epithelial cell proliferation"/>
    <property type="evidence" value="ECO:0000266"/>
    <property type="project" value="RGD"/>
</dbReference>
<dbReference type="GO" id="GO:0007212">
    <property type="term" value="P:G protein-coupled dopamine receptor signaling pathway"/>
    <property type="evidence" value="ECO:0000266"/>
    <property type="project" value="RGD"/>
</dbReference>
<dbReference type="GO" id="GO:0007215">
    <property type="term" value="P:glutamate receptor signaling pathway"/>
    <property type="evidence" value="ECO:0000266"/>
    <property type="project" value="RGD"/>
</dbReference>
<dbReference type="GO" id="GO:0007611">
    <property type="term" value="P:learning or memory"/>
    <property type="evidence" value="ECO:0000266"/>
    <property type="project" value="RGD"/>
</dbReference>
<dbReference type="GO" id="GO:0006509">
    <property type="term" value="P:membrane protein ectodomain proteolysis"/>
    <property type="evidence" value="ECO:0000250"/>
    <property type="project" value="UniProtKB"/>
</dbReference>
<dbReference type="GO" id="GO:0031293">
    <property type="term" value="P:membrane protein intracellular domain proteolysis"/>
    <property type="evidence" value="ECO:0000266"/>
    <property type="project" value="RGD"/>
</dbReference>
<dbReference type="GO" id="GO:0002262">
    <property type="term" value="P:myeloid cell homeostasis"/>
    <property type="evidence" value="ECO:0000266"/>
    <property type="project" value="RGD"/>
</dbReference>
<dbReference type="GO" id="GO:0051402">
    <property type="term" value="P:neuron apoptotic process"/>
    <property type="evidence" value="ECO:0000266"/>
    <property type="project" value="RGD"/>
</dbReference>
<dbReference type="GO" id="GO:0007220">
    <property type="term" value="P:Notch receptor processing"/>
    <property type="evidence" value="ECO:0000266"/>
    <property type="project" value="RGD"/>
</dbReference>
<dbReference type="GO" id="GO:0007219">
    <property type="term" value="P:Notch signaling pathway"/>
    <property type="evidence" value="ECO:0007669"/>
    <property type="project" value="UniProtKB-KW"/>
</dbReference>
<dbReference type="GO" id="GO:0042986">
    <property type="term" value="P:positive regulation of amyloid precursor protein biosynthetic process"/>
    <property type="evidence" value="ECO:0000266"/>
    <property type="project" value="RGD"/>
</dbReference>
<dbReference type="GO" id="GO:0016485">
    <property type="term" value="P:protein processing"/>
    <property type="evidence" value="ECO:0000270"/>
    <property type="project" value="RGD"/>
</dbReference>
<dbReference type="GO" id="GO:1900271">
    <property type="term" value="P:regulation of long-term synaptic potentiation"/>
    <property type="evidence" value="ECO:0000266"/>
    <property type="project" value="RGD"/>
</dbReference>
<dbReference type="GO" id="GO:1990926">
    <property type="term" value="P:short-term synaptic potentiation"/>
    <property type="evidence" value="ECO:0000266"/>
    <property type="project" value="RGD"/>
</dbReference>
<dbReference type="GO" id="GO:0042098">
    <property type="term" value="P:T cell proliferation"/>
    <property type="evidence" value="ECO:0000266"/>
    <property type="project" value="RGD"/>
</dbReference>
<dbReference type="CDD" id="cd03881">
    <property type="entry name" value="M28_Nicastrin"/>
    <property type="match status" value="1"/>
</dbReference>
<dbReference type="FunFam" id="3.40.630.10:FF:000030">
    <property type="entry name" value="nicastrin"/>
    <property type="match status" value="1"/>
</dbReference>
<dbReference type="Gene3D" id="3.40.630.10">
    <property type="entry name" value="Zn peptidases"/>
    <property type="match status" value="1"/>
</dbReference>
<dbReference type="InterPro" id="IPR041084">
    <property type="entry name" value="Ncstrn_small"/>
</dbReference>
<dbReference type="InterPro" id="IPR008710">
    <property type="entry name" value="Nicastrin"/>
</dbReference>
<dbReference type="PANTHER" id="PTHR21092">
    <property type="entry name" value="NICASTRIN"/>
    <property type="match status" value="1"/>
</dbReference>
<dbReference type="PANTHER" id="PTHR21092:SF0">
    <property type="entry name" value="NICASTRIN"/>
    <property type="match status" value="1"/>
</dbReference>
<dbReference type="Pfam" id="PF18266">
    <property type="entry name" value="Ncstrn_small"/>
    <property type="match status" value="1"/>
</dbReference>
<dbReference type="Pfam" id="PF05450">
    <property type="entry name" value="Nicastrin"/>
    <property type="match status" value="1"/>
</dbReference>
<dbReference type="SUPFAM" id="SSF53187">
    <property type="entry name" value="Zn-dependent exopeptidases"/>
    <property type="match status" value="1"/>
</dbReference>
<accession>Q8CGU6</accession>
<accession>Q8CH12</accession>
<name>NICA_RAT</name>
<protein>
    <recommendedName>
        <fullName>Nicastrin</fullName>
    </recommendedName>
</protein>
<feature type="signal peptide" evidence="2">
    <location>
        <begin position="1"/>
        <end position="34"/>
    </location>
</feature>
<feature type="chain" id="PRO_0000019683" description="Nicastrin">
    <location>
        <begin position="35"/>
        <end position="708"/>
    </location>
</feature>
<feature type="topological domain" description="Lumenal" evidence="1">
    <location>
        <begin position="35"/>
        <end position="668"/>
    </location>
</feature>
<feature type="transmembrane region" description="Helical" evidence="1">
    <location>
        <begin position="669"/>
        <end position="689"/>
    </location>
</feature>
<feature type="topological domain" description="Cytoplasmic" evidence="1">
    <location>
        <begin position="690"/>
        <end position="708"/>
    </location>
</feature>
<feature type="glycosylation site" description="N-linked (GlcNAc...) asparagine" evidence="2">
    <location>
        <position position="44"/>
    </location>
</feature>
<feature type="glycosylation site" description="N-linked (GlcNAc...) asparagine" evidence="2">
    <location>
        <position position="54"/>
    </location>
</feature>
<feature type="glycosylation site" description="N-linked (GlcNAc...) asparagine" evidence="2">
    <location>
        <position position="128"/>
    </location>
</feature>
<feature type="glycosylation site" description="N-linked (GlcNAc...) asparagine" evidence="2">
    <location>
        <position position="186"/>
    </location>
</feature>
<feature type="glycosylation site" description="N-linked (GlcNAc...) asparagine" evidence="2">
    <location>
        <position position="203"/>
    </location>
</feature>
<feature type="glycosylation site" description="N-linked (GlcNAc...) asparagine" evidence="2">
    <location>
        <position position="263"/>
    </location>
</feature>
<feature type="glycosylation site" description="N-linked (GlcNAc...) asparagine" evidence="2">
    <location>
        <position position="386"/>
    </location>
</feature>
<feature type="glycosylation site" description="N-linked (GlcNAc...) asparagine" evidence="5">
    <location>
        <position position="434"/>
    </location>
</feature>
<feature type="glycosylation site" description="N-linked (GlcNAc...) asparagine" evidence="2">
    <location>
        <position position="463"/>
    </location>
</feature>
<feature type="glycosylation site" description="N-linked (GlcNAc...) asparagine" evidence="2">
    <location>
        <position position="507"/>
    </location>
</feature>
<feature type="glycosylation site" description="N-linked (GlcNAc...) asparagine" evidence="2">
    <location>
        <position position="529"/>
    </location>
</feature>
<feature type="glycosylation site" description="N-linked (GlcNAc...) asparagine" evidence="2">
    <location>
        <position position="561"/>
    </location>
</feature>
<feature type="glycosylation site" description="N-linked (GlcNAc...) asparagine" evidence="2">
    <location>
        <position position="572"/>
    </location>
</feature>
<feature type="glycosylation site" description="N-linked (GlcNAc...) asparagine" evidence="2">
    <location>
        <position position="579"/>
    </location>
</feature>
<feature type="glycosylation site" description="N-linked (GlcNAc...) asparagine" evidence="2">
    <location>
        <position position="593"/>
    </location>
</feature>
<feature type="glycosylation site" description="N-linked (GlcNAc...) asparagine" evidence="2">
    <location>
        <position position="611"/>
    </location>
</feature>
<feature type="disulfide bond" evidence="1">
    <location>
        <begin position="49"/>
        <end position="61"/>
    </location>
</feature>
<feature type="disulfide bond" evidence="1">
    <location>
        <begin position="139"/>
        <end position="158"/>
    </location>
</feature>
<feature type="disulfide bond" evidence="1">
    <location>
        <begin position="194"/>
        <end position="212"/>
    </location>
</feature>
<feature type="disulfide bond" evidence="1">
    <location>
        <begin position="229"/>
        <end position="247"/>
    </location>
</feature>
<feature type="disulfide bond" evidence="1">
    <location>
        <begin position="585"/>
        <end position="619"/>
    </location>
</feature>
<feature type="splice variant" id="VSP_008387" description="In isoform 2." evidence="3">
    <location>
        <begin position="63"/>
        <end position="708"/>
    </location>
</feature>
<reference key="1">
    <citation type="submission" date="2002-05" db="EMBL/GenBank/DDBJ databases">
        <title>Rat nicastrin cDNA.</title>
        <authorList>
            <person name="Crestini A."/>
            <person name="Piscopo P."/>
            <person name="Tartaglia M."/>
            <person name="Confaloni A."/>
        </authorList>
    </citation>
    <scope>NUCLEOTIDE SEQUENCE [MRNA] (ISOFORMS 1 AND 2)</scope>
    <source>
        <strain>Sprague-Dawley</strain>
    </source>
</reference>
<reference key="2">
    <citation type="submission" date="2007-09" db="UniProtKB">
        <authorList>
            <person name="Lubec G."/>
            <person name="Kang S.U."/>
            <person name="Lubec S."/>
        </authorList>
    </citation>
    <scope>PROTEIN SEQUENCE OF 83-100; 314-322; 355-385; 391-428; 485-495; 520-527; 622-651 AND 659-665</scope>
    <scope>IDENTIFICATION BY MASS SPECTROMETRY</scope>
    <source>
        <strain>Sprague-Dawley</strain>
        <tissue>Brain</tissue>
    </source>
</reference>
<reference key="3">
    <citation type="journal article" date="2013" name="J. Proteome Res.">
        <title>Site-specific glycan-peptide analysis for determination of N-glycoproteome heterogeneity.</title>
        <authorList>
            <person name="Parker B.L."/>
            <person name="Thaysen-Andersen M."/>
            <person name="Solis N."/>
            <person name="Scott N.E."/>
            <person name="Larsen M.R."/>
            <person name="Graham M.E."/>
            <person name="Packer N.H."/>
            <person name="Cordwell S.J."/>
        </authorList>
    </citation>
    <scope>GLYCOSYLATION [LARGE SCALE ANALYSIS] AT ASN-434</scope>
    <scope>IDENTIFICATION BY MASS SPECTROMETRY [LARGE SCALE ANALYSIS]</scope>
    <source>
        <tissue>Brain</tissue>
    </source>
</reference>
<keyword id="KW-0025">Alternative splicing</keyword>
<keyword id="KW-0968">Cytoplasmic vesicle</keyword>
<keyword id="KW-0903">Direct protein sequencing</keyword>
<keyword id="KW-1015">Disulfide bond</keyword>
<keyword id="KW-0325">Glycoprotein</keyword>
<keyword id="KW-0472">Membrane</keyword>
<keyword id="KW-0914">Notch signaling pathway</keyword>
<keyword id="KW-1185">Reference proteome</keyword>
<keyword id="KW-0732">Signal</keyword>
<keyword id="KW-0812">Transmembrane</keyword>
<keyword id="KW-1133">Transmembrane helix</keyword>
<proteinExistence type="evidence at protein level"/>